<gene>
    <name evidence="1" type="primary">atpF</name>
    <name type="ordered locus">HPAG1_1074</name>
</gene>
<evidence type="ECO:0000255" key="1">
    <source>
        <dbReference type="HAMAP-Rule" id="MF_01398"/>
    </source>
</evidence>
<feature type="chain" id="PRO_0000368522" description="ATP synthase subunit b">
    <location>
        <begin position="1"/>
        <end position="171"/>
    </location>
</feature>
<feature type="transmembrane region" description="Helical" evidence="1">
    <location>
        <begin position="2"/>
        <end position="22"/>
    </location>
</feature>
<proteinExistence type="inferred from homology"/>
<comment type="function">
    <text evidence="1">F(1)F(0) ATP synthase produces ATP from ADP in the presence of a proton or sodium gradient. F-type ATPases consist of two structural domains, F(1) containing the extramembraneous catalytic core and F(0) containing the membrane proton channel, linked together by a central stalk and a peripheral stalk. During catalysis, ATP synthesis in the catalytic domain of F(1) is coupled via a rotary mechanism of the central stalk subunits to proton translocation.</text>
</comment>
<comment type="function">
    <text evidence="1">Component of the F(0) channel, it forms part of the peripheral stalk, linking F(1) to F(0).</text>
</comment>
<comment type="subunit">
    <text evidence="1">F-type ATPases have 2 components, F(1) - the catalytic core - and F(0) - the membrane proton channel. F(1) has five subunits: alpha(3), beta(3), gamma(1), delta(1), epsilon(1). F(0) has three main subunits: a(1), b(2) and c(10-14). The alpha and beta chains form an alternating ring which encloses part of the gamma chain. F(1) is attached to F(0) by a central stalk formed by the gamma and epsilon chains, while a peripheral stalk is formed by the delta and b chains.</text>
</comment>
<comment type="subcellular location">
    <subcellularLocation>
        <location evidence="1">Cell inner membrane</location>
        <topology evidence="1">Single-pass membrane protein</topology>
    </subcellularLocation>
</comment>
<comment type="similarity">
    <text evidence="1">Belongs to the ATPase B chain family.</text>
</comment>
<accession>Q1CSD1</accession>
<organism>
    <name type="scientific">Helicobacter pylori (strain HPAG1)</name>
    <dbReference type="NCBI Taxonomy" id="357544"/>
    <lineage>
        <taxon>Bacteria</taxon>
        <taxon>Pseudomonadati</taxon>
        <taxon>Campylobacterota</taxon>
        <taxon>Epsilonproteobacteria</taxon>
        <taxon>Campylobacterales</taxon>
        <taxon>Helicobacteraceae</taxon>
        <taxon>Helicobacter</taxon>
    </lineage>
</organism>
<name>ATPF_HELPH</name>
<protein>
    <recommendedName>
        <fullName evidence="1">ATP synthase subunit b</fullName>
    </recommendedName>
    <alternativeName>
        <fullName evidence="1">ATP synthase F(0) sector subunit b</fullName>
    </alternativeName>
    <alternativeName>
        <fullName evidence="1">ATPase subunit I</fullName>
    </alternativeName>
    <alternativeName>
        <fullName evidence="1">F-type ATPase subunit b</fullName>
        <shortName evidence="1">F-ATPase subunit b</shortName>
    </alternativeName>
</protein>
<keyword id="KW-0066">ATP synthesis</keyword>
<keyword id="KW-0997">Cell inner membrane</keyword>
<keyword id="KW-1003">Cell membrane</keyword>
<keyword id="KW-0138">CF(0)</keyword>
<keyword id="KW-0375">Hydrogen ion transport</keyword>
<keyword id="KW-0406">Ion transport</keyword>
<keyword id="KW-0472">Membrane</keyword>
<keyword id="KW-0812">Transmembrane</keyword>
<keyword id="KW-1133">Transmembrane helix</keyword>
<keyword id="KW-0813">Transport</keyword>
<sequence length="171" mass="19871">MFLVKMVLGFLILLSPLCATGLDVSQTDIIERSLNFLLFAGILWYFLAKKLRSFLRSKSLEISKRLEEIQAQLKVSKENKKKLLKELEQAKEKAELIISDANKEAYTITQKYELQTKMDVENLIKNSKALMDLEVKKIKRELVESVFKDLRESKKVSFNVQDCVNILKQRL</sequence>
<reference key="1">
    <citation type="journal article" date="2006" name="Proc. Natl. Acad. Sci. U.S.A.">
        <title>The complete genome sequence of a chronic atrophic gastritis Helicobacter pylori strain: evolution during disease progression.</title>
        <authorList>
            <person name="Oh J.D."/>
            <person name="Kling-Baeckhed H."/>
            <person name="Giannakis M."/>
            <person name="Xu J."/>
            <person name="Fulton R.S."/>
            <person name="Fulton L.A."/>
            <person name="Cordum H.S."/>
            <person name="Wang C."/>
            <person name="Elliott G."/>
            <person name="Edwards J."/>
            <person name="Mardis E.R."/>
            <person name="Engstrand L.G."/>
            <person name="Gordon J.I."/>
        </authorList>
    </citation>
    <scope>NUCLEOTIDE SEQUENCE [LARGE SCALE GENOMIC DNA]</scope>
    <source>
        <strain>HPAG1</strain>
    </source>
</reference>
<dbReference type="EMBL" id="CP000241">
    <property type="protein sequence ID" value="ABF85141.1"/>
    <property type="molecule type" value="Genomic_DNA"/>
</dbReference>
<dbReference type="RefSeq" id="WP_000480465.1">
    <property type="nucleotide sequence ID" value="NC_008086.1"/>
</dbReference>
<dbReference type="SMR" id="Q1CSD1"/>
<dbReference type="KEGG" id="hpa:HPAG1_1074"/>
<dbReference type="HOGENOM" id="CLU_129781_1_0_7"/>
<dbReference type="GO" id="GO:0005886">
    <property type="term" value="C:plasma membrane"/>
    <property type="evidence" value="ECO:0007669"/>
    <property type="project" value="UniProtKB-SubCell"/>
</dbReference>
<dbReference type="GO" id="GO:0045259">
    <property type="term" value="C:proton-transporting ATP synthase complex"/>
    <property type="evidence" value="ECO:0007669"/>
    <property type="project" value="UniProtKB-KW"/>
</dbReference>
<dbReference type="GO" id="GO:0046933">
    <property type="term" value="F:proton-transporting ATP synthase activity, rotational mechanism"/>
    <property type="evidence" value="ECO:0007669"/>
    <property type="project" value="UniProtKB-UniRule"/>
</dbReference>
<dbReference type="CDD" id="cd06503">
    <property type="entry name" value="ATP-synt_Fo_b"/>
    <property type="match status" value="1"/>
</dbReference>
<dbReference type="Gene3D" id="1.20.5.620">
    <property type="entry name" value="F1F0 ATP synthase subunit B, membrane domain"/>
    <property type="match status" value="1"/>
</dbReference>
<dbReference type="HAMAP" id="MF_01398">
    <property type="entry name" value="ATP_synth_b_bprime"/>
    <property type="match status" value="1"/>
</dbReference>
<dbReference type="InterPro" id="IPR028987">
    <property type="entry name" value="ATP_synth_B-like_membr_sf"/>
</dbReference>
<dbReference type="InterPro" id="IPR002146">
    <property type="entry name" value="ATP_synth_b/b'su_bac/chlpt"/>
</dbReference>
<dbReference type="NCBIfam" id="NF006292">
    <property type="entry name" value="PRK08475.1"/>
    <property type="match status" value="1"/>
</dbReference>
<dbReference type="Pfam" id="PF00430">
    <property type="entry name" value="ATP-synt_B"/>
    <property type="match status" value="1"/>
</dbReference>
<dbReference type="SUPFAM" id="SSF81573">
    <property type="entry name" value="F1F0 ATP synthase subunit B, membrane domain"/>
    <property type="match status" value="1"/>
</dbReference>